<protein>
    <recommendedName>
        <fullName evidence="1">Glycine dehydrogenase (decarboxylating)</fullName>
        <ecNumber evidence="1">1.4.4.2</ecNumber>
    </recommendedName>
    <alternativeName>
        <fullName evidence="1">Glycine cleavage system P-protein</fullName>
    </alternativeName>
    <alternativeName>
        <fullName evidence="1">Glycine decarboxylase</fullName>
    </alternativeName>
    <alternativeName>
        <fullName evidence="1">Glycine dehydrogenase (aminomethyl-transferring)</fullName>
    </alternativeName>
</protein>
<reference key="1">
    <citation type="journal article" date="2006" name="Genome Biol.">
        <title>The genome of Rhizobium leguminosarum has recognizable core and accessory components.</title>
        <authorList>
            <person name="Young J.P.W."/>
            <person name="Crossman L.C."/>
            <person name="Johnston A.W.B."/>
            <person name="Thomson N.R."/>
            <person name="Ghazoui Z.F."/>
            <person name="Hull K.H."/>
            <person name="Wexler M."/>
            <person name="Curson A.R.J."/>
            <person name="Todd J.D."/>
            <person name="Poole P.S."/>
            <person name="Mauchline T.H."/>
            <person name="East A.K."/>
            <person name="Quail M.A."/>
            <person name="Churcher C."/>
            <person name="Arrowsmith C."/>
            <person name="Cherevach I."/>
            <person name="Chillingworth T."/>
            <person name="Clarke K."/>
            <person name="Cronin A."/>
            <person name="Davis P."/>
            <person name="Fraser A."/>
            <person name="Hance Z."/>
            <person name="Hauser H."/>
            <person name="Jagels K."/>
            <person name="Moule S."/>
            <person name="Mungall K."/>
            <person name="Norbertczak H."/>
            <person name="Rabbinowitsch E."/>
            <person name="Sanders M."/>
            <person name="Simmonds M."/>
            <person name="Whitehead S."/>
            <person name="Parkhill J."/>
        </authorList>
    </citation>
    <scope>NUCLEOTIDE SEQUENCE [LARGE SCALE GENOMIC DNA]</scope>
    <source>
        <strain>DSM 114642 / LMG 32736 / 3841</strain>
    </source>
</reference>
<accession>Q1MG62</accession>
<dbReference type="EC" id="1.4.4.2" evidence="1"/>
<dbReference type="EMBL" id="AM236080">
    <property type="protein sequence ID" value="CAK08061.1"/>
    <property type="molecule type" value="Genomic_DNA"/>
</dbReference>
<dbReference type="RefSeq" id="WP_011652127.1">
    <property type="nucleotide sequence ID" value="NC_008380.1"/>
</dbReference>
<dbReference type="SMR" id="Q1MG62"/>
<dbReference type="EnsemblBacteria" id="CAK08061">
    <property type="protein sequence ID" value="CAK08061"/>
    <property type="gene ID" value="RL2573"/>
</dbReference>
<dbReference type="KEGG" id="rle:RL2573"/>
<dbReference type="eggNOG" id="COG0403">
    <property type="taxonomic scope" value="Bacteria"/>
</dbReference>
<dbReference type="eggNOG" id="COG1003">
    <property type="taxonomic scope" value="Bacteria"/>
</dbReference>
<dbReference type="HOGENOM" id="CLU_004620_3_2_5"/>
<dbReference type="Proteomes" id="UP000006575">
    <property type="component" value="Chromosome"/>
</dbReference>
<dbReference type="GO" id="GO:0005829">
    <property type="term" value="C:cytosol"/>
    <property type="evidence" value="ECO:0007669"/>
    <property type="project" value="TreeGrafter"/>
</dbReference>
<dbReference type="GO" id="GO:0005960">
    <property type="term" value="C:glycine cleavage complex"/>
    <property type="evidence" value="ECO:0007669"/>
    <property type="project" value="TreeGrafter"/>
</dbReference>
<dbReference type="GO" id="GO:0016594">
    <property type="term" value="F:glycine binding"/>
    <property type="evidence" value="ECO:0007669"/>
    <property type="project" value="TreeGrafter"/>
</dbReference>
<dbReference type="GO" id="GO:0004375">
    <property type="term" value="F:glycine dehydrogenase (decarboxylating) activity"/>
    <property type="evidence" value="ECO:0007669"/>
    <property type="project" value="UniProtKB-EC"/>
</dbReference>
<dbReference type="GO" id="GO:0030170">
    <property type="term" value="F:pyridoxal phosphate binding"/>
    <property type="evidence" value="ECO:0007669"/>
    <property type="project" value="TreeGrafter"/>
</dbReference>
<dbReference type="GO" id="GO:0019464">
    <property type="term" value="P:glycine decarboxylation via glycine cleavage system"/>
    <property type="evidence" value="ECO:0007669"/>
    <property type="project" value="UniProtKB-UniRule"/>
</dbReference>
<dbReference type="CDD" id="cd00613">
    <property type="entry name" value="GDC-P"/>
    <property type="match status" value="2"/>
</dbReference>
<dbReference type="FunFam" id="3.40.640.10:FF:000005">
    <property type="entry name" value="Glycine dehydrogenase (decarboxylating), mitochondrial"/>
    <property type="match status" value="1"/>
</dbReference>
<dbReference type="FunFam" id="3.90.1150.10:FF:000007">
    <property type="entry name" value="Glycine dehydrogenase (decarboxylating), mitochondrial"/>
    <property type="match status" value="1"/>
</dbReference>
<dbReference type="FunFam" id="3.40.640.10:FF:000007">
    <property type="entry name" value="glycine dehydrogenase (Decarboxylating), mitochondrial"/>
    <property type="match status" value="1"/>
</dbReference>
<dbReference type="Gene3D" id="3.90.1150.10">
    <property type="entry name" value="Aspartate Aminotransferase, domain 1"/>
    <property type="match status" value="2"/>
</dbReference>
<dbReference type="Gene3D" id="3.40.640.10">
    <property type="entry name" value="Type I PLP-dependent aspartate aminotransferase-like (Major domain)"/>
    <property type="match status" value="2"/>
</dbReference>
<dbReference type="HAMAP" id="MF_00711">
    <property type="entry name" value="GcvP"/>
    <property type="match status" value="1"/>
</dbReference>
<dbReference type="InterPro" id="IPR003437">
    <property type="entry name" value="GcvP"/>
</dbReference>
<dbReference type="InterPro" id="IPR049316">
    <property type="entry name" value="GDC-P_C"/>
</dbReference>
<dbReference type="InterPro" id="IPR049315">
    <property type="entry name" value="GDC-P_N"/>
</dbReference>
<dbReference type="InterPro" id="IPR020581">
    <property type="entry name" value="GDC_P"/>
</dbReference>
<dbReference type="InterPro" id="IPR015424">
    <property type="entry name" value="PyrdxlP-dep_Trfase"/>
</dbReference>
<dbReference type="InterPro" id="IPR015421">
    <property type="entry name" value="PyrdxlP-dep_Trfase_major"/>
</dbReference>
<dbReference type="InterPro" id="IPR015422">
    <property type="entry name" value="PyrdxlP-dep_Trfase_small"/>
</dbReference>
<dbReference type="NCBIfam" id="TIGR00461">
    <property type="entry name" value="gcvP"/>
    <property type="match status" value="1"/>
</dbReference>
<dbReference type="NCBIfam" id="NF003346">
    <property type="entry name" value="PRK04366.1"/>
    <property type="match status" value="1"/>
</dbReference>
<dbReference type="PANTHER" id="PTHR11773:SF1">
    <property type="entry name" value="GLYCINE DEHYDROGENASE (DECARBOXYLATING), MITOCHONDRIAL"/>
    <property type="match status" value="1"/>
</dbReference>
<dbReference type="PANTHER" id="PTHR11773">
    <property type="entry name" value="GLYCINE DEHYDROGENASE, DECARBOXYLATING"/>
    <property type="match status" value="1"/>
</dbReference>
<dbReference type="Pfam" id="PF21478">
    <property type="entry name" value="GcvP2_C"/>
    <property type="match status" value="1"/>
</dbReference>
<dbReference type="Pfam" id="PF02347">
    <property type="entry name" value="GDC-P"/>
    <property type="match status" value="2"/>
</dbReference>
<dbReference type="SUPFAM" id="SSF53383">
    <property type="entry name" value="PLP-dependent transferases"/>
    <property type="match status" value="2"/>
</dbReference>
<proteinExistence type="inferred from homology"/>
<feature type="chain" id="PRO_1000045600" description="Glycine dehydrogenase (decarboxylating)">
    <location>
        <begin position="1"/>
        <end position="954"/>
    </location>
</feature>
<feature type="modified residue" description="N6-(pyridoxal phosphate)lysine" evidence="1">
    <location>
        <position position="704"/>
    </location>
</feature>
<evidence type="ECO:0000255" key="1">
    <source>
        <dbReference type="HAMAP-Rule" id="MF_00711"/>
    </source>
</evidence>
<keyword id="KW-0560">Oxidoreductase</keyword>
<keyword id="KW-0663">Pyridoxal phosphate</keyword>
<comment type="function">
    <text evidence="1">The glycine cleavage system catalyzes the degradation of glycine. The P protein binds the alpha-amino group of glycine through its pyridoxal phosphate cofactor; CO(2) is released and the remaining methylamine moiety is then transferred to the lipoamide cofactor of the H protein.</text>
</comment>
<comment type="catalytic activity">
    <reaction evidence="1">
        <text>N(6)-[(R)-lipoyl]-L-lysyl-[glycine-cleavage complex H protein] + glycine + H(+) = N(6)-[(R)-S(8)-aminomethyldihydrolipoyl]-L-lysyl-[glycine-cleavage complex H protein] + CO2</text>
        <dbReference type="Rhea" id="RHEA:24304"/>
        <dbReference type="Rhea" id="RHEA-COMP:10494"/>
        <dbReference type="Rhea" id="RHEA-COMP:10495"/>
        <dbReference type="ChEBI" id="CHEBI:15378"/>
        <dbReference type="ChEBI" id="CHEBI:16526"/>
        <dbReference type="ChEBI" id="CHEBI:57305"/>
        <dbReference type="ChEBI" id="CHEBI:83099"/>
        <dbReference type="ChEBI" id="CHEBI:83143"/>
        <dbReference type="EC" id="1.4.4.2"/>
    </reaction>
</comment>
<comment type="cofactor">
    <cofactor evidence="1">
        <name>pyridoxal 5'-phosphate</name>
        <dbReference type="ChEBI" id="CHEBI:597326"/>
    </cofactor>
</comment>
<comment type="subunit">
    <text evidence="1">The glycine cleavage system is composed of four proteins: P, T, L and H.</text>
</comment>
<comment type="similarity">
    <text evidence="1">Belongs to the GcvP family.</text>
</comment>
<name>GCSP_RHIJ3</name>
<gene>
    <name evidence="1" type="primary">gcvP</name>
    <name type="ordered locus">RL2573</name>
</gene>
<sequence>MTTPTEFQFTDYQPYDFANRRHIGPSPAEMTDMLKVIGYNSLDGLIDATLPPSIRQKAPLVWGAPMTEREALDKLRETANKNKVLVSLIGQGYYGTITPPVIQRNILENPAWYTAYTPYQPEISQGRLEALLNYQTMICDLTGLDVANASLLDEATAAAEGMAIAERVAKSKAKAFFVDADCHPQTIALIRTRAEPLGWSVIVGNPVTDLDPVDVFGAIFQYPGTHGHVHDFTGLISRLHQTGAIAIVAADILALTLLKSPGEMGADIAVGSSQRFGVPVGYGGPHAAYMSVKDAIKRSMPGRLVGVSVDARGNRAYRLSLQTREQHIRREKATSNICTAQVLLAVMASMYAVFHGPKGIKAIAQQVHQKAVLMAKGLEKLGYKVEPETFFDTITVDVGHMQGLILRAAVAEGVNLRKVGETKIGMSLDERTRPATLEAVWRAFGGNFTIADFEPSYRLPKGLLRTSDYLTHPIFHMNRAESEMTRYIRRLSDRDLALDRSMIPLGSCTMKLNATAEMLPITWPEFSDIHPFVPADQALGYREMIDDLIEKLCAVTGYDAFSMQPNSGAQGEYAGLLTIRNYHIANGDGHRDVCLIPTSAHGTNPASAQMVGMKVVVVKVRENGDIDLDDFRAKAEQHAANLACCMITYPSTHGVFEETVKEICDLVHEHGGQVYLDGANMNAMVGLSRPGDIGSDVSHLNLHKTFCIPHGGGGPGMGPIGVKAHLAPYLPGHPETDGRPGAVSAAAFGSASILPISWSYCLMMGGEGLTQATKVAILNANYIAARLRGAYDVLYKSETGRVAHECIIDTRPLVDSSGVTVDDVAKRLIDCGFHAPTMSWPVAGTLMIEPTESETKAELDRFCEAILAIREEARAIEDGRMDKVNNPLKNAPHTVEDLVGEWDRPYSREQACFPPGAFRVDKYWSPVNRVDNVYGDRNLICTCPPVESYAEAAE</sequence>
<organism>
    <name type="scientific">Rhizobium johnstonii (strain DSM 114642 / LMG 32736 / 3841)</name>
    <name type="common">Rhizobium leguminosarum bv. viciae</name>
    <dbReference type="NCBI Taxonomy" id="216596"/>
    <lineage>
        <taxon>Bacteria</taxon>
        <taxon>Pseudomonadati</taxon>
        <taxon>Pseudomonadota</taxon>
        <taxon>Alphaproteobacteria</taxon>
        <taxon>Hyphomicrobiales</taxon>
        <taxon>Rhizobiaceae</taxon>
        <taxon>Rhizobium/Agrobacterium group</taxon>
        <taxon>Rhizobium</taxon>
        <taxon>Rhizobium johnstonii</taxon>
    </lineage>
</organism>